<accession>Q47J99</accession>
<organism>
    <name type="scientific">Dechloromonas aromatica (strain RCB)</name>
    <dbReference type="NCBI Taxonomy" id="159087"/>
    <lineage>
        <taxon>Bacteria</taxon>
        <taxon>Pseudomonadati</taxon>
        <taxon>Pseudomonadota</taxon>
        <taxon>Betaproteobacteria</taxon>
        <taxon>Rhodocyclales</taxon>
        <taxon>Azonexaceae</taxon>
        <taxon>Dechloromonas</taxon>
    </lineage>
</organism>
<dbReference type="EMBL" id="CP000089">
    <property type="protein sequence ID" value="AAZ45082.1"/>
    <property type="molecule type" value="Genomic_DNA"/>
</dbReference>
<dbReference type="SMR" id="Q47J99"/>
<dbReference type="STRING" id="159087.Daro_0323"/>
<dbReference type="KEGG" id="dar:Daro_0323"/>
<dbReference type="eggNOG" id="COG0185">
    <property type="taxonomic scope" value="Bacteria"/>
</dbReference>
<dbReference type="HOGENOM" id="CLU_144911_0_1_4"/>
<dbReference type="OrthoDB" id="9797833at2"/>
<dbReference type="GO" id="GO:0005737">
    <property type="term" value="C:cytoplasm"/>
    <property type="evidence" value="ECO:0007669"/>
    <property type="project" value="UniProtKB-ARBA"/>
</dbReference>
<dbReference type="GO" id="GO:0015935">
    <property type="term" value="C:small ribosomal subunit"/>
    <property type="evidence" value="ECO:0007669"/>
    <property type="project" value="InterPro"/>
</dbReference>
<dbReference type="GO" id="GO:0019843">
    <property type="term" value="F:rRNA binding"/>
    <property type="evidence" value="ECO:0007669"/>
    <property type="project" value="UniProtKB-UniRule"/>
</dbReference>
<dbReference type="GO" id="GO:0003735">
    <property type="term" value="F:structural constituent of ribosome"/>
    <property type="evidence" value="ECO:0007669"/>
    <property type="project" value="InterPro"/>
</dbReference>
<dbReference type="GO" id="GO:0000028">
    <property type="term" value="P:ribosomal small subunit assembly"/>
    <property type="evidence" value="ECO:0007669"/>
    <property type="project" value="TreeGrafter"/>
</dbReference>
<dbReference type="GO" id="GO:0006412">
    <property type="term" value="P:translation"/>
    <property type="evidence" value="ECO:0007669"/>
    <property type="project" value="UniProtKB-UniRule"/>
</dbReference>
<dbReference type="FunFam" id="3.30.860.10:FF:000001">
    <property type="entry name" value="30S ribosomal protein S19"/>
    <property type="match status" value="1"/>
</dbReference>
<dbReference type="Gene3D" id="3.30.860.10">
    <property type="entry name" value="30s Ribosomal Protein S19, Chain A"/>
    <property type="match status" value="1"/>
</dbReference>
<dbReference type="HAMAP" id="MF_00531">
    <property type="entry name" value="Ribosomal_uS19"/>
    <property type="match status" value="1"/>
</dbReference>
<dbReference type="InterPro" id="IPR002222">
    <property type="entry name" value="Ribosomal_uS19"/>
</dbReference>
<dbReference type="InterPro" id="IPR005732">
    <property type="entry name" value="Ribosomal_uS19_bac-type"/>
</dbReference>
<dbReference type="InterPro" id="IPR020934">
    <property type="entry name" value="Ribosomal_uS19_CS"/>
</dbReference>
<dbReference type="InterPro" id="IPR023575">
    <property type="entry name" value="Ribosomal_uS19_SF"/>
</dbReference>
<dbReference type="NCBIfam" id="TIGR01050">
    <property type="entry name" value="rpsS_bact"/>
    <property type="match status" value="1"/>
</dbReference>
<dbReference type="PANTHER" id="PTHR11880">
    <property type="entry name" value="RIBOSOMAL PROTEIN S19P FAMILY MEMBER"/>
    <property type="match status" value="1"/>
</dbReference>
<dbReference type="PANTHER" id="PTHR11880:SF8">
    <property type="entry name" value="SMALL RIBOSOMAL SUBUNIT PROTEIN US19M"/>
    <property type="match status" value="1"/>
</dbReference>
<dbReference type="Pfam" id="PF00203">
    <property type="entry name" value="Ribosomal_S19"/>
    <property type="match status" value="1"/>
</dbReference>
<dbReference type="PIRSF" id="PIRSF002144">
    <property type="entry name" value="Ribosomal_S19"/>
    <property type="match status" value="1"/>
</dbReference>
<dbReference type="PRINTS" id="PR00975">
    <property type="entry name" value="RIBOSOMALS19"/>
</dbReference>
<dbReference type="SUPFAM" id="SSF54570">
    <property type="entry name" value="Ribosomal protein S19"/>
    <property type="match status" value="1"/>
</dbReference>
<dbReference type="PROSITE" id="PS00323">
    <property type="entry name" value="RIBOSOMAL_S19"/>
    <property type="match status" value="1"/>
</dbReference>
<proteinExistence type="inferred from homology"/>
<name>RS19_DECAR</name>
<comment type="function">
    <text evidence="1">Protein S19 forms a complex with S13 that binds strongly to the 16S ribosomal RNA.</text>
</comment>
<comment type="similarity">
    <text evidence="1">Belongs to the universal ribosomal protein uS19 family.</text>
</comment>
<protein>
    <recommendedName>
        <fullName evidence="1">Small ribosomal subunit protein uS19</fullName>
    </recommendedName>
    <alternativeName>
        <fullName evidence="2">30S ribosomal protein S19</fullName>
    </alternativeName>
</protein>
<gene>
    <name evidence="1" type="primary">rpsS</name>
    <name type="ordered locus">Daro_0323</name>
</gene>
<evidence type="ECO:0000255" key="1">
    <source>
        <dbReference type="HAMAP-Rule" id="MF_00531"/>
    </source>
</evidence>
<evidence type="ECO:0000305" key="2"/>
<sequence>MGRSLKKGPFVDAHLIDKVEAVRATSDKRPIKTWSRRSTILPEFIGLTIAVHNGKQHIPVFVTENMVGHKLGEFSLTRTFKGHTAGKKAKK</sequence>
<keyword id="KW-0687">Ribonucleoprotein</keyword>
<keyword id="KW-0689">Ribosomal protein</keyword>
<keyword id="KW-0694">RNA-binding</keyword>
<keyword id="KW-0699">rRNA-binding</keyword>
<feature type="chain" id="PRO_0000265353" description="Small ribosomal subunit protein uS19">
    <location>
        <begin position="1"/>
        <end position="91"/>
    </location>
</feature>
<reference key="1">
    <citation type="journal article" date="2009" name="BMC Genomics">
        <title>Metabolic analysis of the soil microbe Dechloromonas aromatica str. RCB: indications of a surprisingly complex life-style and cryptic anaerobic pathways for aromatic degradation.</title>
        <authorList>
            <person name="Salinero K.K."/>
            <person name="Keller K."/>
            <person name="Feil W.S."/>
            <person name="Feil H."/>
            <person name="Trong S."/>
            <person name="Di Bartolo G."/>
            <person name="Lapidus A."/>
        </authorList>
    </citation>
    <scope>NUCLEOTIDE SEQUENCE [LARGE SCALE GENOMIC DNA]</scope>
    <source>
        <strain>RCB</strain>
    </source>
</reference>